<feature type="chain" id="PRO_0000309270" description="Uncharacterized protein CBUA0006">
    <location>
        <begin position="1"/>
        <end position="341"/>
    </location>
</feature>
<feature type="region of interest" description="Disordered" evidence="2">
    <location>
        <begin position="319"/>
        <end position="341"/>
    </location>
</feature>
<feature type="coiled-coil region" evidence="1">
    <location>
        <begin position="153"/>
        <end position="179"/>
    </location>
</feature>
<feature type="compositionally biased region" description="Polar residues" evidence="2">
    <location>
        <begin position="319"/>
        <end position="335"/>
    </location>
</feature>
<gene>
    <name type="ordered locus">CBUA0006</name>
</gene>
<geneLocation type="plasmid">
    <name>pQpH1</name>
</geneLocation>
<accession>Q45952</accession>
<accession>Q7CC37</accession>
<evidence type="ECO:0000255" key="1"/>
<evidence type="ECO:0000256" key="2">
    <source>
        <dbReference type="SAM" id="MobiDB-lite"/>
    </source>
</evidence>
<proteinExistence type="predicted"/>
<dbReference type="EMBL" id="AE016829">
    <property type="protein sequence ID" value="AAO91584.1"/>
    <property type="molecule type" value="Genomic_DNA"/>
</dbReference>
<dbReference type="EMBL" id="X75356">
    <property type="protein sequence ID" value="CAA53133.1"/>
    <property type="molecule type" value="Genomic_DNA"/>
</dbReference>
<dbReference type="PIR" id="S38245">
    <property type="entry name" value="S38245"/>
</dbReference>
<dbReference type="RefSeq" id="NP_052363.1">
    <property type="nucleotide sequence ID" value="NC_002118.1"/>
</dbReference>
<dbReference type="RefSeq" id="NP_819024.1">
    <property type="nucleotide sequence ID" value="NC_004704.2"/>
</dbReference>
<dbReference type="RefSeq" id="WP_010891181.1">
    <property type="nucleotide sequence ID" value="NC_004704.2"/>
</dbReference>
<dbReference type="EnsemblBacteria" id="AAO91584">
    <property type="protein sequence ID" value="AAO91584"/>
    <property type="gene ID" value="CBUA0006"/>
</dbReference>
<dbReference type="GeneID" id="1207836"/>
<dbReference type="KEGG" id="cbu:CBUA0006"/>
<dbReference type="PATRIC" id="fig|227377.7.peg.2093"/>
<dbReference type="eggNOG" id="ENOG50340G1">
    <property type="taxonomic scope" value="Bacteria"/>
</dbReference>
<dbReference type="HOGENOM" id="CLU_887721_0_0_6"/>
<dbReference type="OrthoDB" id="5654048at2"/>
<dbReference type="PRO" id="PR:Q45952"/>
<dbReference type="Proteomes" id="UP000002671">
    <property type="component" value="Plasmid pQpH1"/>
</dbReference>
<keyword id="KW-0175">Coiled coil</keyword>
<keyword id="KW-0614">Plasmid</keyword>
<keyword id="KW-1185">Reference proteome</keyword>
<reference key="1">
    <citation type="journal article" date="1995" name="Eur. J. Epidemiol.">
        <title>Analysis of the entire nucleotide sequence of the cryptic plasmid QpH1 from Coxiella burnetti.</title>
        <authorList>
            <person name="Thiele D."/>
            <person name="Willems H."/>
            <person name="Haas M."/>
            <person name="Krauss H."/>
        </authorList>
    </citation>
    <scope>NUCLEOTIDE SEQUENCE [GENOMIC DNA]</scope>
</reference>
<reference key="2">
    <citation type="journal article" date="2003" name="Proc. Natl. Acad. Sci. U.S.A.">
        <title>Complete genome sequence of the Q-fever pathogen, Coxiella burnetii.</title>
        <authorList>
            <person name="Seshadri R."/>
            <person name="Paulsen I.T."/>
            <person name="Eisen J.A."/>
            <person name="Read T.D."/>
            <person name="Nelson K.E."/>
            <person name="Nelson W.C."/>
            <person name="Ward N.L."/>
            <person name="Tettelin H."/>
            <person name="Davidsen T.M."/>
            <person name="Beanan M.J."/>
            <person name="DeBoy R.T."/>
            <person name="Daugherty S.C."/>
            <person name="Brinkac L.M."/>
            <person name="Madupu R."/>
            <person name="Dodson R.J."/>
            <person name="Khouri H.M."/>
            <person name="Lee K.H."/>
            <person name="Carty H.A."/>
            <person name="Scanlan D."/>
            <person name="Heinzen R.A."/>
            <person name="Thompson H.A."/>
            <person name="Samuel J.E."/>
            <person name="Fraser C.M."/>
            <person name="Heidelberg J.F."/>
        </authorList>
    </citation>
    <scope>NUCLEOTIDE SEQUENCE [LARGE SCALE GENOMIC DNA]</scope>
    <source>
        <strain>RSA 493 / Nine Mile phase I</strain>
        <plasmid>pQpH1</plasmid>
    </source>
</reference>
<name>Y3006_COXBU</name>
<protein>
    <recommendedName>
        <fullName>Uncharacterized protein CBUA0006</fullName>
    </recommendedName>
</protein>
<organism>
    <name type="scientific">Coxiella burnetii (strain RSA 493 / Nine Mile phase I)</name>
    <dbReference type="NCBI Taxonomy" id="227377"/>
    <lineage>
        <taxon>Bacteria</taxon>
        <taxon>Pseudomonadati</taxon>
        <taxon>Pseudomonadota</taxon>
        <taxon>Gammaproteobacteria</taxon>
        <taxon>Legionellales</taxon>
        <taxon>Coxiellaceae</taxon>
        <taxon>Coxiella</taxon>
    </lineage>
</organism>
<sequence>MRMFRESKSEEKKSPSSQTAGLFATVPSLKDIMIDRLIEQLGGIAELNKQVVRDPRLWGAINERLTQHFLLLVVQGKQGQVEAMLKVNPALILFARGDVTDYSGQTFKNISAWEYVLWAYDSHMYRMLFNYIPKEQRPLALQQLIDLETNGIAYTLSEKVMNAEREAEETRETIIREAHYDFSPLIDALQTYVTNVERWSFEECVEHWRKKVGGAQCMVPVHVGNEYCYPDRSFDPIPRFNEKNLPRRHNFYNYVSGADESWFPLSPAGLGTNFAIMRGCMRAVAGACWRVGRQWACNDLAAITALREVRQSDLIQLKEQLQNPAPESAPSTSKTLRSKNP</sequence>